<keyword id="KW-0106">Calcium</keyword>
<keyword id="KW-1217">Cell adhesion impairing toxin</keyword>
<keyword id="KW-1015">Disulfide bond</keyword>
<keyword id="KW-0325">Glycoprotein</keyword>
<keyword id="KW-1199">Hemostasis impairing toxin</keyword>
<keyword id="KW-0378">Hydrolase</keyword>
<keyword id="KW-0479">Metal-binding</keyword>
<keyword id="KW-0482">Metalloprotease</keyword>
<keyword id="KW-1201">Platelet aggregation inhibiting toxin</keyword>
<keyword id="KW-0645">Protease</keyword>
<keyword id="KW-0964">Secreted</keyword>
<keyword id="KW-0732">Signal</keyword>
<keyword id="KW-0800">Toxin</keyword>
<keyword id="KW-0862">Zinc</keyword>
<keyword id="KW-0865">Zymogen</keyword>
<proteinExistence type="evidence at protein level"/>
<comment type="function">
    <text evidence="1">Inhibits ADP-induced platelet aggregation (probably by binding integrin alpha-IIb/beta-3 (ITGA2B/ITGB3)) and degrades fibrinogen.</text>
</comment>
<comment type="cofactor">
    <cofactor evidence="1">
        <name>Zn(2+)</name>
        <dbReference type="ChEBI" id="CHEBI:29105"/>
    </cofactor>
    <text evidence="1">Binds 1 zinc ion per subunit.</text>
</comment>
<comment type="subcellular location">
    <subcellularLocation>
        <location evidence="6">Secreted</location>
    </subcellularLocation>
</comment>
<comment type="tissue specificity">
    <text evidence="8">Expressed by the venom gland.</text>
</comment>
<comment type="miscellaneous">
    <text>The disintegrin domain belongs to the long disintegrin subfamily.</text>
</comment>
<comment type="similarity">
    <text evidence="7">Belongs to the venom metalloproteinase (M12B) family. P-II subfamily.</text>
</comment>
<protein>
    <recommendedName>
        <fullName>Zinc metalloproteinase-disintegrin 8</fullName>
        <ecNumber>3.4.24.-</ecNumber>
    </recommendedName>
    <alternativeName>
        <fullName>Snake venom metalloproteinase</fullName>
        <shortName>SVMP</shortName>
    </alternativeName>
</protein>
<name>VM28_CROAD</name>
<sequence length="488" mass="54826">MIQVLLVTICLAVFPYQGSSIILESGNVNDYEVVYPRKVTALPKGAAQPKYEDAMQYEFKVNGEPVVLHLEKNKELFSEDYSETHYSPDGREITTYPLVEDHCYYHGRIENDADSTASISACNGLKGHFKLQGETYLIEPLKLSDSEAHAVYKYENVEKEDEASKMCGVTETNWESYEPIKKASQLNLPPEQQRFPQTYIELVVVADHRMYTKYDGDKTEISSIIYEIVNTLTQIFRPLHIRVALIGLEIWSSGELSKVTLSADDTLEAFGEWRETVLMNRKRHDNAQLLTGMIFNETIEGRTYKSGMCNPKHSVGIVRDYRTRRHFVANRMAHELGHNLGIDHDRDSCTCGANSCIMSATVSNEPSSQFSDCSLNKYLNYIVRYQSTTRCLHNEPSETDIVSPPFCGNYFKEVGEDCDCGPPANCQNPCCDAATCKLTTGSQCAEGLCCDQCKFTKKGTACRPARGDWNDDTCTGQSADCPRNGLYG</sequence>
<accession>J3SBP9</accession>
<organism>
    <name type="scientific">Crotalus adamanteus</name>
    <name type="common">Eastern diamondback rattlesnake</name>
    <dbReference type="NCBI Taxonomy" id="8729"/>
    <lineage>
        <taxon>Eukaryota</taxon>
        <taxon>Metazoa</taxon>
        <taxon>Chordata</taxon>
        <taxon>Craniata</taxon>
        <taxon>Vertebrata</taxon>
        <taxon>Euteleostomi</taxon>
        <taxon>Lepidosauria</taxon>
        <taxon>Squamata</taxon>
        <taxon>Bifurcata</taxon>
        <taxon>Unidentata</taxon>
        <taxon>Episquamata</taxon>
        <taxon>Toxicofera</taxon>
        <taxon>Serpentes</taxon>
        <taxon>Colubroidea</taxon>
        <taxon>Viperidae</taxon>
        <taxon>Crotalinae</taxon>
        <taxon>Crotalus</taxon>
    </lineage>
</organism>
<feature type="signal peptide" evidence="3">
    <location>
        <begin position="1"/>
        <end position="20"/>
    </location>
</feature>
<feature type="propeptide" id="PRO_0000425621" evidence="1">
    <location>
        <begin position="21"/>
        <end position="191"/>
    </location>
</feature>
<feature type="chain" id="PRO_0000425622" description="Zinc metalloproteinase-disintegrin 8">
    <location>
        <begin position="192"/>
        <end position="488"/>
    </location>
</feature>
<feature type="domain" description="Peptidase M12B" evidence="5">
    <location>
        <begin position="198"/>
        <end position="396"/>
    </location>
</feature>
<feature type="domain" description="Disintegrin" evidence="4">
    <location>
        <begin position="404"/>
        <end position="488"/>
    </location>
</feature>
<feature type="short sequence motif" description="Cell attachment site">
    <location>
        <begin position="466"/>
        <end position="468"/>
    </location>
</feature>
<feature type="active site" evidence="5">
    <location>
        <position position="335"/>
    </location>
</feature>
<feature type="binding site" evidence="1">
    <location>
        <position position="201"/>
    </location>
    <ligand>
        <name>Ca(2+)</name>
        <dbReference type="ChEBI" id="CHEBI:29108"/>
        <label>1</label>
    </ligand>
</feature>
<feature type="binding site" evidence="1">
    <location>
        <position position="285"/>
    </location>
    <ligand>
        <name>Ca(2+)</name>
        <dbReference type="ChEBI" id="CHEBI:29108"/>
        <label>1</label>
    </ligand>
</feature>
<feature type="binding site" evidence="5">
    <location>
        <position position="334"/>
    </location>
    <ligand>
        <name>Zn(2+)</name>
        <dbReference type="ChEBI" id="CHEBI:29105"/>
        <note>catalytic</note>
    </ligand>
</feature>
<feature type="binding site" evidence="5">
    <location>
        <position position="338"/>
    </location>
    <ligand>
        <name>Zn(2+)</name>
        <dbReference type="ChEBI" id="CHEBI:29105"/>
        <note>catalytic</note>
    </ligand>
</feature>
<feature type="binding site" evidence="5">
    <location>
        <position position="344"/>
    </location>
    <ligand>
        <name>Zn(2+)</name>
        <dbReference type="ChEBI" id="CHEBI:29105"/>
        <note>catalytic</note>
    </ligand>
</feature>
<feature type="binding site" evidence="1">
    <location>
        <position position="391"/>
    </location>
    <ligand>
        <name>Ca(2+)</name>
        <dbReference type="ChEBI" id="CHEBI:29108"/>
        <label>1</label>
    </ligand>
</feature>
<feature type="binding site" evidence="1">
    <location>
        <position position="394"/>
    </location>
    <ligand>
        <name>Ca(2+)</name>
        <dbReference type="ChEBI" id="CHEBI:29108"/>
        <label>1</label>
    </ligand>
</feature>
<feature type="binding site" evidence="1">
    <location>
        <position position="409"/>
    </location>
    <ligand>
        <name>Ca(2+)</name>
        <dbReference type="ChEBI" id="CHEBI:29108"/>
        <label>2</label>
    </ligand>
</feature>
<feature type="binding site" evidence="1">
    <location>
        <position position="413"/>
    </location>
    <ligand>
        <name>Ca(2+)</name>
        <dbReference type="ChEBI" id="CHEBI:29108"/>
        <label>2</label>
    </ligand>
</feature>
<feature type="binding site" evidence="1">
    <location>
        <position position="416"/>
    </location>
    <ligand>
        <name>Ca(2+)</name>
        <dbReference type="ChEBI" id="CHEBI:29108"/>
        <label>2</label>
    </ligand>
</feature>
<feature type="binding site" evidence="1">
    <location>
        <position position="419"/>
    </location>
    <ligand>
        <name>Ca(2+)</name>
        <dbReference type="ChEBI" id="CHEBI:29108"/>
        <label>2</label>
    </ligand>
</feature>
<feature type="glycosylation site" description="N-linked (GlcNAc...) asparagine" evidence="3">
    <location>
        <position position="296"/>
    </location>
</feature>
<feature type="disulfide bond" evidence="5">
    <location>
        <begin position="309"/>
        <end position="391"/>
    </location>
</feature>
<feature type="disulfide bond" evidence="5">
    <location>
        <begin position="349"/>
        <end position="373"/>
    </location>
</feature>
<feature type="disulfide bond" evidence="5">
    <location>
        <begin position="351"/>
        <end position="356"/>
    </location>
</feature>
<feature type="disulfide bond" evidence="7">
    <location>
        <begin position="407"/>
        <end position="426"/>
    </location>
</feature>
<feature type="disulfide bond" evidence="2">
    <location>
        <begin position="418"/>
        <end position="436"/>
    </location>
</feature>
<feature type="disulfide bond" evidence="2">
    <location>
        <begin position="420"/>
        <end position="431"/>
    </location>
</feature>
<feature type="disulfide bond" evidence="2">
    <location>
        <begin position="430"/>
        <end position="453"/>
    </location>
</feature>
<feature type="disulfide bond" evidence="2">
    <location>
        <begin position="444"/>
        <end position="450"/>
    </location>
</feature>
<feature type="disulfide bond" evidence="2">
    <location>
        <begin position="449"/>
        <end position="474"/>
    </location>
</feature>
<feature type="disulfide bond" evidence="2 4">
    <location>
        <begin position="462"/>
        <end position="481"/>
    </location>
</feature>
<reference key="1">
    <citation type="journal article" date="2012" name="BMC Genomics">
        <title>The venom-gland transcriptome of the eastern diamondback rattlesnake (Crotalus adamanteus).</title>
        <authorList>
            <person name="Rokyta D.R."/>
            <person name="Lemmon A.R."/>
            <person name="Margres M.J."/>
            <person name="Aronow K."/>
        </authorList>
    </citation>
    <scope>NUCLEOTIDE SEQUENCE [MRNA]</scope>
    <source>
        <tissue>Venom gland</tissue>
    </source>
</reference>
<reference key="2">
    <citation type="journal article" date="2014" name="J. Proteomics">
        <title>Linking the transcriptome and proteome to characterize the venom of the eastern diamondback rattlesnake (Crotalus adamanteus).</title>
        <authorList>
            <person name="Margres M.J."/>
            <person name="McGivern J.J."/>
            <person name="Wray K.P."/>
            <person name="Seavy M."/>
            <person name="Calvin K."/>
            <person name="Rokyta D.R."/>
        </authorList>
    </citation>
    <scope>IDENTIFICATION BY MASS SPECTROMETRY</scope>
    <scope>SUBCELLULAR LOCATION</scope>
    <source>
        <tissue>Venom</tissue>
    </source>
</reference>
<evidence type="ECO:0000250" key="1"/>
<evidence type="ECO:0000250" key="2">
    <source>
        <dbReference type="UniProtKB" id="Q0NZX5"/>
    </source>
</evidence>
<evidence type="ECO:0000255" key="3"/>
<evidence type="ECO:0000255" key="4">
    <source>
        <dbReference type="PROSITE-ProRule" id="PRU00068"/>
    </source>
</evidence>
<evidence type="ECO:0000255" key="5">
    <source>
        <dbReference type="PROSITE-ProRule" id="PRU00276"/>
    </source>
</evidence>
<evidence type="ECO:0000269" key="6">
    <source>
    </source>
</evidence>
<evidence type="ECO:0000305" key="7"/>
<evidence type="ECO:0000305" key="8">
    <source>
    </source>
</evidence>
<dbReference type="EC" id="3.4.24.-"/>
<dbReference type="EMBL" id="JU173704">
    <property type="protein sequence ID" value="AFJ49230.1"/>
    <property type="molecule type" value="mRNA"/>
</dbReference>
<dbReference type="SMR" id="J3SBP9"/>
<dbReference type="MEROPS" id="M12.313"/>
<dbReference type="GO" id="GO:0005576">
    <property type="term" value="C:extracellular region"/>
    <property type="evidence" value="ECO:0007669"/>
    <property type="project" value="UniProtKB-SubCell"/>
</dbReference>
<dbReference type="GO" id="GO:0005886">
    <property type="term" value="C:plasma membrane"/>
    <property type="evidence" value="ECO:0007669"/>
    <property type="project" value="TreeGrafter"/>
</dbReference>
<dbReference type="GO" id="GO:0046872">
    <property type="term" value="F:metal ion binding"/>
    <property type="evidence" value="ECO:0007669"/>
    <property type="project" value="UniProtKB-KW"/>
</dbReference>
<dbReference type="GO" id="GO:0004222">
    <property type="term" value="F:metalloendopeptidase activity"/>
    <property type="evidence" value="ECO:0007669"/>
    <property type="project" value="InterPro"/>
</dbReference>
<dbReference type="GO" id="GO:0090729">
    <property type="term" value="F:toxin activity"/>
    <property type="evidence" value="ECO:0007669"/>
    <property type="project" value="UniProtKB-KW"/>
</dbReference>
<dbReference type="GO" id="GO:0006508">
    <property type="term" value="P:proteolysis"/>
    <property type="evidence" value="ECO:0007669"/>
    <property type="project" value="UniProtKB-KW"/>
</dbReference>
<dbReference type="CDD" id="cd04269">
    <property type="entry name" value="ZnMc_adamalysin_II_like"/>
    <property type="match status" value="1"/>
</dbReference>
<dbReference type="FunFam" id="4.10.70.10:FF:000003">
    <property type="entry name" value="Disintegrin and metalloproteinase domain-containing protein 17"/>
    <property type="match status" value="1"/>
</dbReference>
<dbReference type="FunFam" id="3.40.390.10:FF:000002">
    <property type="entry name" value="Disintegrin and metalloproteinase domain-containing protein 22"/>
    <property type="match status" value="1"/>
</dbReference>
<dbReference type="Gene3D" id="3.40.390.10">
    <property type="entry name" value="Collagenase (Catalytic Domain)"/>
    <property type="match status" value="1"/>
</dbReference>
<dbReference type="Gene3D" id="4.10.70.10">
    <property type="entry name" value="Disintegrin domain"/>
    <property type="match status" value="1"/>
</dbReference>
<dbReference type="InterPro" id="IPR018358">
    <property type="entry name" value="Disintegrin_CS"/>
</dbReference>
<dbReference type="InterPro" id="IPR001762">
    <property type="entry name" value="Disintegrin_dom"/>
</dbReference>
<dbReference type="InterPro" id="IPR036436">
    <property type="entry name" value="Disintegrin_dom_sf"/>
</dbReference>
<dbReference type="InterPro" id="IPR024079">
    <property type="entry name" value="MetalloPept_cat_dom_sf"/>
</dbReference>
<dbReference type="InterPro" id="IPR001590">
    <property type="entry name" value="Peptidase_M12B"/>
</dbReference>
<dbReference type="InterPro" id="IPR002870">
    <property type="entry name" value="Peptidase_M12B_N"/>
</dbReference>
<dbReference type="InterPro" id="IPR034027">
    <property type="entry name" value="Reprolysin_adamalysin"/>
</dbReference>
<dbReference type="PANTHER" id="PTHR11905">
    <property type="entry name" value="ADAM A DISINTEGRIN AND METALLOPROTEASE DOMAIN"/>
    <property type="match status" value="1"/>
</dbReference>
<dbReference type="PANTHER" id="PTHR11905:SF32">
    <property type="entry name" value="DISINTEGRIN AND METALLOPROTEINASE DOMAIN-CONTAINING PROTEIN 28"/>
    <property type="match status" value="1"/>
</dbReference>
<dbReference type="Pfam" id="PF00200">
    <property type="entry name" value="Disintegrin"/>
    <property type="match status" value="1"/>
</dbReference>
<dbReference type="Pfam" id="PF01562">
    <property type="entry name" value="Pep_M12B_propep"/>
    <property type="match status" value="1"/>
</dbReference>
<dbReference type="Pfam" id="PF01421">
    <property type="entry name" value="Reprolysin"/>
    <property type="match status" value="1"/>
</dbReference>
<dbReference type="PRINTS" id="PR00289">
    <property type="entry name" value="DISINTEGRIN"/>
</dbReference>
<dbReference type="SMART" id="SM00050">
    <property type="entry name" value="DISIN"/>
    <property type="match status" value="1"/>
</dbReference>
<dbReference type="SUPFAM" id="SSF57552">
    <property type="entry name" value="Blood coagulation inhibitor (disintegrin)"/>
    <property type="match status" value="1"/>
</dbReference>
<dbReference type="SUPFAM" id="SSF55486">
    <property type="entry name" value="Metalloproteases ('zincins'), catalytic domain"/>
    <property type="match status" value="1"/>
</dbReference>
<dbReference type="PROSITE" id="PS50215">
    <property type="entry name" value="ADAM_MEPRO"/>
    <property type="match status" value="1"/>
</dbReference>
<dbReference type="PROSITE" id="PS00427">
    <property type="entry name" value="DISINTEGRIN_1"/>
    <property type="match status" value="1"/>
</dbReference>
<dbReference type="PROSITE" id="PS50214">
    <property type="entry name" value="DISINTEGRIN_2"/>
    <property type="match status" value="1"/>
</dbReference>